<gene>
    <name type="primary">Tbc1d2b</name>
    <name type="synonym">Kiaa1055</name>
</gene>
<keyword id="KW-0175">Coiled coil</keyword>
<keyword id="KW-0967">Endosome</keyword>
<keyword id="KW-0343">GTPase activation</keyword>
<keyword id="KW-0597">Phosphoprotein</keyword>
<keyword id="KW-1185">Reference proteome</keyword>
<name>TBD2B_MOUSE</name>
<feature type="chain" id="PRO_0000315714" description="TBC1 domain family member 2B">
    <location>
        <begin position="1"/>
        <end position="965"/>
    </location>
</feature>
<feature type="domain" description="PH" evidence="3">
    <location>
        <begin position="34"/>
        <end position="139"/>
    </location>
</feature>
<feature type="domain" description="Rab-GAP TBC" evidence="4">
    <location>
        <begin position="664"/>
        <end position="858"/>
    </location>
</feature>
<feature type="region of interest" description="Disordered" evidence="5">
    <location>
        <begin position="1"/>
        <end position="27"/>
    </location>
</feature>
<feature type="region of interest" description="Disordered" evidence="5">
    <location>
        <begin position="257"/>
        <end position="288"/>
    </location>
</feature>
<feature type="region of interest" description="Disordered" evidence="5">
    <location>
        <begin position="310"/>
        <end position="340"/>
    </location>
</feature>
<feature type="coiled-coil region" evidence="2">
    <location>
        <begin position="339"/>
        <end position="537"/>
    </location>
</feature>
<feature type="compositionally biased region" description="Basic and acidic residues" evidence="5">
    <location>
        <begin position="260"/>
        <end position="277"/>
    </location>
</feature>
<feature type="modified residue" description="Phosphoserine" evidence="1">
    <location>
        <position position="155"/>
    </location>
</feature>
<feature type="modified residue" description="Phosphoserine" evidence="1">
    <location>
        <position position="317"/>
    </location>
</feature>
<feature type="modified residue" description="Phosphoserine" evidence="1">
    <location>
        <position position="475"/>
    </location>
</feature>
<feature type="modified residue" description="Phosphoserine" evidence="7">
    <location>
        <position position="959"/>
    </location>
</feature>
<feature type="sequence conflict" description="In Ref. 2; BAE33855." evidence="6" ref="2">
    <original>T</original>
    <variation>A</variation>
    <location>
        <position position="719"/>
    </location>
</feature>
<feature type="sequence conflict" description="In Ref. 2; BAE33855." evidence="6" ref="2">
    <original>F</original>
    <variation>L</variation>
    <location>
        <position position="865"/>
    </location>
</feature>
<comment type="function">
    <text evidence="1">GTPase-activating protein that plays a role in the early steps of endocytosis.</text>
</comment>
<comment type="subcellular location">
    <subcellularLocation>
        <location evidence="1">Early endosome</location>
    </subcellularLocation>
</comment>
<comment type="sequence caution" evidence="6">
    <conflict type="erroneous initiation">
        <sequence resource="EMBL-CDS" id="BAC98083"/>
    </conflict>
</comment>
<evidence type="ECO:0000250" key="1">
    <source>
        <dbReference type="UniProtKB" id="Q9UPU7"/>
    </source>
</evidence>
<evidence type="ECO:0000255" key="2"/>
<evidence type="ECO:0000255" key="3">
    <source>
        <dbReference type="PROSITE-ProRule" id="PRU00145"/>
    </source>
</evidence>
<evidence type="ECO:0000255" key="4">
    <source>
        <dbReference type="PROSITE-ProRule" id="PRU00163"/>
    </source>
</evidence>
<evidence type="ECO:0000256" key="5">
    <source>
        <dbReference type="SAM" id="MobiDB-lite"/>
    </source>
</evidence>
<evidence type="ECO:0000305" key="6"/>
<evidence type="ECO:0007744" key="7">
    <source>
    </source>
</evidence>
<accession>Q3U0J8</accession>
<accession>Q2VPQ4</accession>
<accession>Q6PHN8</accession>
<accession>Q6ZPZ5</accession>
<sequence>MPGAGDGVEESCSGGEGAVPGTGSEAGAVAGREPSRLCGYLQKLSGKGPLRGYRSRWFVFDSRRCYLYYFKSPQDALPLGHLDIADACFSYQGRDEAAEPGADPPTHFQVHSAGAVTVLKAPNRELMTYWLQELQQKRWEYCNSLDMMKWDSRTSPTPGDFPKGLVARDTTDIISQHPNPSAEKARTVLAVEAAPGELVGDRAAHQPAPGHPNPINFYSLKQWGNELKNSMSSFRPGRGHSESRRTVFYTNEEWELLDPPPKDLEESLVPEERKKPMPEGSKGVASSGFPFEFGRNPYKGKRPLKDIIGSYKNRHSSSDPLLEGTATSSGSSGGPTKPVPEMQLQIQSQQEELEQLKKDLSSQKELIRLLQQTVRSSQYDKYFTNPQISQGVPGDTLELLHQKDEQILGLSGQLERFGLEKESLQQEVRTLKSKVGELNERLGMLMETIQAKDEVIIKLSACEGSVSSPTLGPSSPLAIPASKDQLELDRLKDSLQGYKSQNKFLNKEILELSALRRNAERRERDLMAKYSSLEAKLCQVESKYLILLQEMKTPVCSEEQGPARDVIAQLLEDALQVESQEQPEQAFVKPHLVSEFDIYGFRTVPDDDEEEKLVAKVRALDLKTLYLTDNQEVSTGVKWENYFASTMNREMACSPELKNLIRAGIPHEHRSKVWKWCVDRHTRKFKDSMEPDYFQTLLQKALEKQNPASKQIELDLLRTLPNNKHYSSPTSEGIQKLRSVLLAFSWRNPDIGYCQGLNRLVAVALLYLDQEDAFWCLVTIVEVFMPRDYYTKTLLGSQVDQRVFRDLLSEKLPRLHTHFEQYKVDYTLITFNWFLVVFVDSVVSDILFKIWDSFLYEGPKVIFRFALALFKYKEEEILKLQDSMSIFKYLRYFTRTILDARKLISISFGDLNPFPLRQIRNRRAYHLEKVRLELTELEAIREDFLRERDTSPDKGELVSDEEEDT</sequence>
<proteinExistence type="evidence at protein level"/>
<protein>
    <recommendedName>
        <fullName>TBC1 domain family member 2B</fullName>
    </recommendedName>
</protein>
<dbReference type="EMBL" id="AK129273">
    <property type="protein sequence ID" value="BAC98083.1"/>
    <property type="status" value="ALT_INIT"/>
    <property type="molecule type" value="mRNA"/>
</dbReference>
<dbReference type="EMBL" id="AK156788">
    <property type="protein sequence ID" value="BAE33855.1"/>
    <property type="molecule type" value="mRNA"/>
</dbReference>
<dbReference type="EMBL" id="BC056467">
    <property type="protein sequence ID" value="AAH56467.2"/>
    <property type="molecule type" value="mRNA"/>
</dbReference>
<dbReference type="EMBL" id="BC108420">
    <property type="protein sequence ID" value="AAI08421.1"/>
    <property type="molecule type" value="mRNA"/>
</dbReference>
<dbReference type="CCDS" id="CCDS23401.1"/>
<dbReference type="RefSeq" id="NP_919315.2">
    <property type="nucleotide sequence ID" value="NM_194334.2"/>
</dbReference>
<dbReference type="SMR" id="Q3U0J8"/>
<dbReference type="BioGRID" id="211878">
    <property type="interactions" value="2"/>
</dbReference>
<dbReference type="FunCoup" id="Q3U0J8">
    <property type="interactions" value="1743"/>
</dbReference>
<dbReference type="STRING" id="10090.ENSMUSP00000045413"/>
<dbReference type="GlyGen" id="Q3U0J8">
    <property type="glycosylation" value="2 sites"/>
</dbReference>
<dbReference type="iPTMnet" id="Q3U0J8"/>
<dbReference type="PhosphoSitePlus" id="Q3U0J8"/>
<dbReference type="jPOST" id="Q3U0J8"/>
<dbReference type="PaxDb" id="10090-ENSMUSP00000045413"/>
<dbReference type="PeptideAtlas" id="Q3U0J8"/>
<dbReference type="ProteomicsDB" id="263081"/>
<dbReference type="Pumba" id="Q3U0J8"/>
<dbReference type="Antibodypedia" id="56232">
    <property type="antibodies" value="37 antibodies from 11 providers"/>
</dbReference>
<dbReference type="DNASU" id="67016"/>
<dbReference type="Ensembl" id="ENSMUST00000041767.14">
    <property type="protein sequence ID" value="ENSMUSP00000045413.8"/>
    <property type="gene ID" value="ENSMUSG00000037410.14"/>
</dbReference>
<dbReference type="GeneID" id="67016"/>
<dbReference type="KEGG" id="mmu:67016"/>
<dbReference type="UCSC" id="uc009rac.1">
    <property type="organism name" value="mouse"/>
</dbReference>
<dbReference type="AGR" id="MGI:1914266"/>
<dbReference type="CTD" id="23102"/>
<dbReference type="MGI" id="MGI:1914266">
    <property type="gene designation" value="Tbc1d2b"/>
</dbReference>
<dbReference type="VEuPathDB" id="HostDB:ENSMUSG00000037410"/>
<dbReference type="eggNOG" id="KOG2058">
    <property type="taxonomic scope" value="Eukaryota"/>
</dbReference>
<dbReference type="GeneTree" id="ENSGT00940000157737"/>
<dbReference type="HOGENOM" id="CLU_011278_0_0_1"/>
<dbReference type="InParanoid" id="Q3U0J8"/>
<dbReference type="OMA" id="MMRCVEL"/>
<dbReference type="OrthoDB" id="294251at2759"/>
<dbReference type="PhylomeDB" id="Q3U0J8"/>
<dbReference type="TreeFam" id="TF317336"/>
<dbReference type="BioGRID-ORCS" id="67016">
    <property type="hits" value="2 hits in 75 CRISPR screens"/>
</dbReference>
<dbReference type="PRO" id="PR:Q3U0J8"/>
<dbReference type="Proteomes" id="UP000000589">
    <property type="component" value="Chromosome 9"/>
</dbReference>
<dbReference type="RNAct" id="Q3U0J8">
    <property type="molecule type" value="protein"/>
</dbReference>
<dbReference type="Bgee" id="ENSMUSG00000037410">
    <property type="expression patterns" value="Expressed in vault of skull and 231 other cell types or tissues"/>
</dbReference>
<dbReference type="ExpressionAtlas" id="Q3U0J8">
    <property type="expression patterns" value="baseline and differential"/>
</dbReference>
<dbReference type="GO" id="GO:0005829">
    <property type="term" value="C:cytosol"/>
    <property type="evidence" value="ECO:0007669"/>
    <property type="project" value="Ensembl"/>
</dbReference>
<dbReference type="GO" id="GO:0005769">
    <property type="term" value="C:early endosome"/>
    <property type="evidence" value="ECO:0000250"/>
    <property type="project" value="UniProtKB"/>
</dbReference>
<dbReference type="GO" id="GO:0005096">
    <property type="term" value="F:GTPase activator activity"/>
    <property type="evidence" value="ECO:0007669"/>
    <property type="project" value="UniProtKB-KW"/>
</dbReference>
<dbReference type="GO" id="GO:0006897">
    <property type="term" value="P:endocytosis"/>
    <property type="evidence" value="ECO:0000250"/>
    <property type="project" value="UniProtKB"/>
</dbReference>
<dbReference type="CDD" id="cd01265">
    <property type="entry name" value="PH_TBC1D2A"/>
    <property type="match status" value="1"/>
</dbReference>
<dbReference type="FunFam" id="1.10.8.270:FF:000014">
    <property type="entry name" value="Putative TBC1 domain family member 2B"/>
    <property type="match status" value="1"/>
</dbReference>
<dbReference type="FunFam" id="1.10.10.750:FF:000018">
    <property type="entry name" value="TBC domaincontaining protein"/>
    <property type="match status" value="1"/>
</dbReference>
<dbReference type="FunFam" id="1.10.472.80:FF:000018">
    <property type="entry name" value="TBC1 domain family member 2B"/>
    <property type="match status" value="1"/>
</dbReference>
<dbReference type="FunFam" id="2.30.29.30:FF:000326">
    <property type="entry name" value="TBC1 domain family member 2B"/>
    <property type="match status" value="1"/>
</dbReference>
<dbReference type="FunFam" id="1.10.287.1490:FF:000020">
    <property type="entry name" value="TBC1 domain family member 2B isoform X2"/>
    <property type="match status" value="1"/>
</dbReference>
<dbReference type="Gene3D" id="2.30.29.30">
    <property type="entry name" value="Pleckstrin-homology domain (PH domain)/Phosphotyrosine-binding domain (PTB)"/>
    <property type="match status" value="1"/>
</dbReference>
<dbReference type="Gene3D" id="1.10.8.270">
    <property type="entry name" value="putative rabgap domain of human tbc1 domain family member 14 like domains"/>
    <property type="match status" value="1"/>
</dbReference>
<dbReference type="Gene3D" id="1.10.472.80">
    <property type="entry name" value="Ypt/Rab-GAP domain of gyp1p, domain 3"/>
    <property type="match status" value="1"/>
</dbReference>
<dbReference type="InterPro" id="IPR011993">
    <property type="entry name" value="PH-like_dom_sf"/>
</dbReference>
<dbReference type="InterPro" id="IPR001849">
    <property type="entry name" value="PH_domain"/>
</dbReference>
<dbReference type="InterPro" id="IPR000195">
    <property type="entry name" value="Rab-GAP-TBC_dom"/>
</dbReference>
<dbReference type="InterPro" id="IPR035969">
    <property type="entry name" value="Rab-GAP_TBC_sf"/>
</dbReference>
<dbReference type="InterPro" id="IPR050302">
    <property type="entry name" value="Rab_GAP_TBC_domain"/>
</dbReference>
<dbReference type="PANTHER" id="PTHR47219">
    <property type="entry name" value="RAB GTPASE-ACTIVATING PROTEIN 1-LIKE"/>
    <property type="match status" value="1"/>
</dbReference>
<dbReference type="PANTHER" id="PTHR47219:SF20">
    <property type="entry name" value="TBC1 DOMAIN FAMILY MEMBER 2B"/>
    <property type="match status" value="1"/>
</dbReference>
<dbReference type="Pfam" id="PF00169">
    <property type="entry name" value="PH"/>
    <property type="match status" value="1"/>
</dbReference>
<dbReference type="Pfam" id="PF00566">
    <property type="entry name" value="RabGAP-TBC"/>
    <property type="match status" value="1"/>
</dbReference>
<dbReference type="SMART" id="SM00233">
    <property type="entry name" value="PH"/>
    <property type="match status" value="1"/>
</dbReference>
<dbReference type="SMART" id="SM00164">
    <property type="entry name" value="TBC"/>
    <property type="match status" value="1"/>
</dbReference>
<dbReference type="SUPFAM" id="SSF50729">
    <property type="entry name" value="PH domain-like"/>
    <property type="match status" value="1"/>
</dbReference>
<dbReference type="SUPFAM" id="SSF47923">
    <property type="entry name" value="Ypt/Rab-GAP domain of gyp1p"/>
    <property type="match status" value="2"/>
</dbReference>
<dbReference type="PROSITE" id="PS50003">
    <property type="entry name" value="PH_DOMAIN"/>
    <property type="match status" value="1"/>
</dbReference>
<dbReference type="PROSITE" id="PS50086">
    <property type="entry name" value="TBC_RABGAP"/>
    <property type="match status" value="1"/>
</dbReference>
<reference key="1">
    <citation type="journal article" date="2003" name="DNA Res.">
        <title>Prediction of the coding sequences of mouse homologues of KIAA gene: III. The complete nucleotide sequences of 500 mouse KIAA-homologous cDNAs identified by screening of terminal sequences of cDNA clones randomly sampled from size-fractionated libraries.</title>
        <authorList>
            <person name="Okazaki N."/>
            <person name="Kikuno R."/>
            <person name="Ohara R."/>
            <person name="Inamoto S."/>
            <person name="Koseki H."/>
            <person name="Hiraoka S."/>
            <person name="Saga Y."/>
            <person name="Nagase T."/>
            <person name="Ohara O."/>
            <person name="Koga H."/>
        </authorList>
    </citation>
    <scope>NUCLEOTIDE SEQUENCE [LARGE SCALE MRNA]</scope>
    <source>
        <tissue>Embryonic tail</tissue>
    </source>
</reference>
<reference key="2">
    <citation type="journal article" date="2005" name="Science">
        <title>The transcriptional landscape of the mammalian genome.</title>
        <authorList>
            <person name="Carninci P."/>
            <person name="Kasukawa T."/>
            <person name="Katayama S."/>
            <person name="Gough J."/>
            <person name="Frith M.C."/>
            <person name="Maeda N."/>
            <person name="Oyama R."/>
            <person name="Ravasi T."/>
            <person name="Lenhard B."/>
            <person name="Wells C."/>
            <person name="Kodzius R."/>
            <person name="Shimokawa K."/>
            <person name="Bajic V.B."/>
            <person name="Brenner S.E."/>
            <person name="Batalov S."/>
            <person name="Forrest A.R."/>
            <person name="Zavolan M."/>
            <person name="Davis M.J."/>
            <person name="Wilming L.G."/>
            <person name="Aidinis V."/>
            <person name="Allen J.E."/>
            <person name="Ambesi-Impiombato A."/>
            <person name="Apweiler R."/>
            <person name="Aturaliya R.N."/>
            <person name="Bailey T.L."/>
            <person name="Bansal M."/>
            <person name="Baxter L."/>
            <person name="Beisel K.W."/>
            <person name="Bersano T."/>
            <person name="Bono H."/>
            <person name="Chalk A.M."/>
            <person name="Chiu K.P."/>
            <person name="Choudhary V."/>
            <person name="Christoffels A."/>
            <person name="Clutterbuck D.R."/>
            <person name="Crowe M.L."/>
            <person name="Dalla E."/>
            <person name="Dalrymple B.P."/>
            <person name="de Bono B."/>
            <person name="Della Gatta G."/>
            <person name="di Bernardo D."/>
            <person name="Down T."/>
            <person name="Engstrom P."/>
            <person name="Fagiolini M."/>
            <person name="Faulkner G."/>
            <person name="Fletcher C.F."/>
            <person name="Fukushima T."/>
            <person name="Furuno M."/>
            <person name="Futaki S."/>
            <person name="Gariboldi M."/>
            <person name="Georgii-Hemming P."/>
            <person name="Gingeras T.R."/>
            <person name="Gojobori T."/>
            <person name="Green R.E."/>
            <person name="Gustincich S."/>
            <person name="Harbers M."/>
            <person name="Hayashi Y."/>
            <person name="Hensch T.K."/>
            <person name="Hirokawa N."/>
            <person name="Hill D."/>
            <person name="Huminiecki L."/>
            <person name="Iacono M."/>
            <person name="Ikeo K."/>
            <person name="Iwama A."/>
            <person name="Ishikawa T."/>
            <person name="Jakt M."/>
            <person name="Kanapin A."/>
            <person name="Katoh M."/>
            <person name="Kawasawa Y."/>
            <person name="Kelso J."/>
            <person name="Kitamura H."/>
            <person name="Kitano H."/>
            <person name="Kollias G."/>
            <person name="Krishnan S.P."/>
            <person name="Kruger A."/>
            <person name="Kummerfeld S.K."/>
            <person name="Kurochkin I.V."/>
            <person name="Lareau L.F."/>
            <person name="Lazarevic D."/>
            <person name="Lipovich L."/>
            <person name="Liu J."/>
            <person name="Liuni S."/>
            <person name="McWilliam S."/>
            <person name="Madan Babu M."/>
            <person name="Madera M."/>
            <person name="Marchionni L."/>
            <person name="Matsuda H."/>
            <person name="Matsuzawa S."/>
            <person name="Miki H."/>
            <person name="Mignone F."/>
            <person name="Miyake S."/>
            <person name="Morris K."/>
            <person name="Mottagui-Tabar S."/>
            <person name="Mulder N."/>
            <person name="Nakano N."/>
            <person name="Nakauchi H."/>
            <person name="Ng P."/>
            <person name="Nilsson R."/>
            <person name="Nishiguchi S."/>
            <person name="Nishikawa S."/>
            <person name="Nori F."/>
            <person name="Ohara O."/>
            <person name="Okazaki Y."/>
            <person name="Orlando V."/>
            <person name="Pang K.C."/>
            <person name="Pavan W.J."/>
            <person name="Pavesi G."/>
            <person name="Pesole G."/>
            <person name="Petrovsky N."/>
            <person name="Piazza S."/>
            <person name="Reed J."/>
            <person name="Reid J.F."/>
            <person name="Ring B.Z."/>
            <person name="Ringwald M."/>
            <person name="Rost B."/>
            <person name="Ruan Y."/>
            <person name="Salzberg S.L."/>
            <person name="Sandelin A."/>
            <person name="Schneider C."/>
            <person name="Schoenbach C."/>
            <person name="Sekiguchi K."/>
            <person name="Semple C.A."/>
            <person name="Seno S."/>
            <person name="Sessa L."/>
            <person name="Sheng Y."/>
            <person name="Shibata Y."/>
            <person name="Shimada H."/>
            <person name="Shimada K."/>
            <person name="Silva D."/>
            <person name="Sinclair B."/>
            <person name="Sperling S."/>
            <person name="Stupka E."/>
            <person name="Sugiura K."/>
            <person name="Sultana R."/>
            <person name="Takenaka Y."/>
            <person name="Taki K."/>
            <person name="Tammoja K."/>
            <person name="Tan S.L."/>
            <person name="Tang S."/>
            <person name="Taylor M.S."/>
            <person name="Tegner J."/>
            <person name="Teichmann S.A."/>
            <person name="Ueda H.R."/>
            <person name="van Nimwegen E."/>
            <person name="Verardo R."/>
            <person name="Wei C.L."/>
            <person name="Yagi K."/>
            <person name="Yamanishi H."/>
            <person name="Zabarovsky E."/>
            <person name="Zhu S."/>
            <person name="Zimmer A."/>
            <person name="Hide W."/>
            <person name="Bult C."/>
            <person name="Grimmond S.M."/>
            <person name="Teasdale R.D."/>
            <person name="Liu E.T."/>
            <person name="Brusic V."/>
            <person name="Quackenbush J."/>
            <person name="Wahlestedt C."/>
            <person name="Mattick J.S."/>
            <person name="Hume D.A."/>
            <person name="Kai C."/>
            <person name="Sasaki D."/>
            <person name="Tomaru Y."/>
            <person name="Fukuda S."/>
            <person name="Kanamori-Katayama M."/>
            <person name="Suzuki M."/>
            <person name="Aoki J."/>
            <person name="Arakawa T."/>
            <person name="Iida J."/>
            <person name="Imamura K."/>
            <person name="Itoh M."/>
            <person name="Kato T."/>
            <person name="Kawaji H."/>
            <person name="Kawagashira N."/>
            <person name="Kawashima T."/>
            <person name="Kojima M."/>
            <person name="Kondo S."/>
            <person name="Konno H."/>
            <person name="Nakano K."/>
            <person name="Ninomiya N."/>
            <person name="Nishio T."/>
            <person name="Okada M."/>
            <person name="Plessy C."/>
            <person name="Shibata K."/>
            <person name="Shiraki T."/>
            <person name="Suzuki S."/>
            <person name="Tagami M."/>
            <person name="Waki K."/>
            <person name="Watahiki A."/>
            <person name="Okamura-Oho Y."/>
            <person name="Suzuki H."/>
            <person name="Kawai J."/>
            <person name="Hayashizaki Y."/>
        </authorList>
    </citation>
    <scope>NUCLEOTIDE SEQUENCE [LARGE SCALE MRNA]</scope>
    <source>
        <strain>NOD</strain>
        <tissue>Spleen</tissue>
    </source>
</reference>
<reference key="3">
    <citation type="journal article" date="2004" name="Genome Res.">
        <title>The status, quality, and expansion of the NIH full-length cDNA project: the Mammalian Gene Collection (MGC).</title>
        <authorList>
            <consortium name="The MGC Project Team"/>
        </authorList>
    </citation>
    <scope>NUCLEOTIDE SEQUENCE [LARGE SCALE MRNA] OF 447-965</scope>
    <source>
        <strain>C57BL/6J</strain>
        <tissue>Brain</tissue>
    </source>
</reference>
<reference key="4">
    <citation type="journal article" date="2007" name="Proc. Natl. Acad. Sci. U.S.A.">
        <title>Large-scale phosphorylation analysis of mouse liver.</title>
        <authorList>
            <person name="Villen J."/>
            <person name="Beausoleil S.A."/>
            <person name="Gerber S.A."/>
            <person name="Gygi S.P."/>
        </authorList>
    </citation>
    <scope>IDENTIFICATION BY MASS SPECTROMETRY [LARGE SCALE ANALYSIS]</scope>
    <source>
        <tissue>Liver</tissue>
    </source>
</reference>
<reference key="5">
    <citation type="journal article" date="2010" name="Cell">
        <title>A tissue-specific atlas of mouse protein phosphorylation and expression.</title>
        <authorList>
            <person name="Huttlin E.L."/>
            <person name="Jedrychowski M.P."/>
            <person name="Elias J.E."/>
            <person name="Goswami T."/>
            <person name="Rad R."/>
            <person name="Beausoleil S.A."/>
            <person name="Villen J."/>
            <person name="Haas W."/>
            <person name="Sowa M.E."/>
            <person name="Gygi S.P."/>
        </authorList>
    </citation>
    <scope>PHOSPHORYLATION [LARGE SCALE ANALYSIS] AT SER-959</scope>
    <scope>IDENTIFICATION BY MASS SPECTROMETRY [LARGE SCALE ANALYSIS]</scope>
    <source>
        <tissue>Brain</tissue>
        <tissue>Kidney</tissue>
        <tissue>Liver</tissue>
        <tissue>Lung</tissue>
        <tissue>Pancreas</tissue>
        <tissue>Spleen</tissue>
        <tissue>Testis</tissue>
    </source>
</reference>
<organism>
    <name type="scientific">Mus musculus</name>
    <name type="common">Mouse</name>
    <dbReference type="NCBI Taxonomy" id="10090"/>
    <lineage>
        <taxon>Eukaryota</taxon>
        <taxon>Metazoa</taxon>
        <taxon>Chordata</taxon>
        <taxon>Craniata</taxon>
        <taxon>Vertebrata</taxon>
        <taxon>Euteleostomi</taxon>
        <taxon>Mammalia</taxon>
        <taxon>Eutheria</taxon>
        <taxon>Euarchontoglires</taxon>
        <taxon>Glires</taxon>
        <taxon>Rodentia</taxon>
        <taxon>Myomorpha</taxon>
        <taxon>Muroidea</taxon>
        <taxon>Muridae</taxon>
        <taxon>Murinae</taxon>
        <taxon>Mus</taxon>
        <taxon>Mus</taxon>
    </lineage>
</organism>